<organism>
    <name type="scientific">Oryza sativa subsp. indica</name>
    <name type="common">Rice</name>
    <dbReference type="NCBI Taxonomy" id="39946"/>
    <lineage>
        <taxon>Eukaryota</taxon>
        <taxon>Viridiplantae</taxon>
        <taxon>Streptophyta</taxon>
        <taxon>Embryophyta</taxon>
        <taxon>Tracheophyta</taxon>
        <taxon>Spermatophyta</taxon>
        <taxon>Magnoliopsida</taxon>
        <taxon>Liliopsida</taxon>
        <taxon>Poales</taxon>
        <taxon>Poaceae</taxon>
        <taxon>BOP clade</taxon>
        <taxon>Oryzoideae</taxon>
        <taxon>Oryzeae</taxon>
        <taxon>Oryzinae</taxon>
        <taxon>Oryza</taxon>
        <taxon>Oryza sativa</taxon>
    </lineage>
</organism>
<feature type="chain" id="PRO_0000296106" description="Cyclin-dependent kinase F-1">
    <location>
        <begin position="1"/>
        <end position="479"/>
    </location>
</feature>
<feature type="domain" description="Protein kinase" evidence="2">
    <location>
        <begin position="24"/>
        <end position="419"/>
    </location>
</feature>
<feature type="region of interest" description="Disordered" evidence="4">
    <location>
        <begin position="429"/>
        <end position="479"/>
    </location>
</feature>
<feature type="compositionally biased region" description="Basic and acidic residues" evidence="4">
    <location>
        <begin position="468"/>
        <end position="479"/>
    </location>
</feature>
<feature type="active site" description="Proton acceptor" evidence="2 3">
    <location>
        <position position="146"/>
    </location>
</feature>
<feature type="binding site" evidence="2">
    <location>
        <begin position="30"/>
        <end position="38"/>
    </location>
    <ligand>
        <name>ATP</name>
        <dbReference type="ChEBI" id="CHEBI:30616"/>
    </ligand>
</feature>
<feature type="binding site" evidence="2">
    <location>
        <position position="53"/>
    </location>
    <ligand>
        <name>ATP</name>
        <dbReference type="ChEBI" id="CHEBI:30616"/>
    </ligand>
</feature>
<feature type="modified residue" description="Phosphothreonine" evidence="1">
    <location>
        <position position="291"/>
    </location>
</feature>
<proteinExistence type="inferred from homology"/>
<dbReference type="EC" id="2.7.11.22"/>
<dbReference type="EC" id="2.7.11.23"/>
<dbReference type="EMBL" id="CM000131">
    <property type="protein sequence ID" value="EAZ00786.1"/>
    <property type="molecule type" value="Genomic_DNA"/>
</dbReference>
<dbReference type="STRING" id="39946.A2YCH5"/>
<dbReference type="EnsemblPlants" id="BGIOSGA021312-TA">
    <property type="protein sequence ID" value="BGIOSGA021312-PA"/>
    <property type="gene ID" value="BGIOSGA021312"/>
</dbReference>
<dbReference type="EnsemblPlants" id="OsGoSa_06g0016390.01">
    <property type="protein sequence ID" value="OsGoSa_06g0016390.01"/>
    <property type="gene ID" value="OsGoSa_06g0016390"/>
</dbReference>
<dbReference type="EnsemblPlants" id="OsIR64_06g0016370.01">
    <property type="protein sequence ID" value="OsIR64_06g0016370.01"/>
    <property type="gene ID" value="OsIR64_06g0016370"/>
</dbReference>
<dbReference type="EnsemblPlants" id="OsKYG_06g0016720.01">
    <property type="protein sequence ID" value="OsKYG_06g0016720.01"/>
    <property type="gene ID" value="OsKYG_06g0016720"/>
</dbReference>
<dbReference type="EnsemblPlants" id="OsLaMu_06g0016520.01">
    <property type="protein sequence ID" value="OsLaMu_06g0016520.01"/>
    <property type="gene ID" value="OsLaMu_06g0016520"/>
</dbReference>
<dbReference type="EnsemblPlants" id="OsLima_06g0016740.01">
    <property type="protein sequence ID" value="OsLima_06g0016740.01"/>
    <property type="gene ID" value="OsLima_06g0016740"/>
</dbReference>
<dbReference type="EnsemblPlants" id="OsMH63_06G016490_01">
    <property type="protein sequence ID" value="OsMH63_06G016490_01"/>
    <property type="gene ID" value="OsMH63_06G016490"/>
</dbReference>
<dbReference type="EnsemblPlants" id="OsPr106_06g0016870.01">
    <property type="protein sequence ID" value="OsPr106_06g0016870.01"/>
    <property type="gene ID" value="OsPr106_06g0016870"/>
</dbReference>
<dbReference type="EnsemblPlants" id="OsZS97_06G016820_01">
    <property type="protein sequence ID" value="OsZS97_06G016820_01"/>
    <property type="gene ID" value="OsZS97_06G016820"/>
</dbReference>
<dbReference type="Gramene" id="BGIOSGA021312-TA">
    <property type="protein sequence ID" value="BGIOSGA021312-PA"/>
    <property type="gene ID" value="BGIOSGA021312"/>
</dbReference>
<dbReference type="Gramene" id="OsGoSa_06g0016390.01">
    <property type="protein sequence ID" value="OsGoSa_06g0016390.01"/>
    <property type="gene ID" value="OsGoSa_06g0016390"/>
</dbReference>
<dbReference type="Gramene" id="OsIR64_06g0016370.01">
    <property type="protein sequence ID" value="OsIR64_06g0016370.01"/>
    <property type="gene ID" value="OsIR64_06g0016370"/>
</dbReference>
<dbReference type="Gramene" id="OsKYG_06g0016720.01">
    <property type="protein sequence ID" value="OsKYG_06g0016720.01"/>
    <property type="gene ID" value="OsKYG_06g0016720"/>
</dbReference>
<dbReference type="Gramene" id="OsLaMu_06g0016520.01">
    <property type="protein sequence ID" value="OsLaMu_06g0016520.01"/>
    <property type="gene ID" value="OsLaMu_06g0016520"/>
</dbReference>
<dbReference type="Gramene" id="OsLima_06g0016740.01">
    <property type="protein sequence ID" value="OsLima_06g0016740.01"/>
    <property type="gene ID" value="OsLima_06g0016740"/>
</dbReference>
<dbReference type="Gramene" id="OsMH63_06G016490_01">
    <property type="protein sequence ID" value="OsMH63_06G016490_01"/>
    <property type="gene ID" value="OsMH63_06G016490"/>
</dbReference>
<dbReference type="Gramene" id="OsPr106_06g0016870.01">
    <property type="protein sequence ID" value="OsPr106_06g0016870.01"/>
    <property type="gene ID" value="OsPr106_06g0016870"/>
</dbReference>
<dbReference type="Gramene" id="OsZS97_06G016820_01">
    <property type="protein sequence ID" value="OsZS97_06G016820_01"/>
    <property type="gene ID" value="OsZS97_06G016820"/>
</dbReference>
<dbReference type="HOGENOM" id="CLU_000288_181_1_1"/>
<dbReference type="OMA" id="WSIHTRR"/>
<dbReference type="OrthoDB" id="1732493at2759"/>
<dbReference type="Proteomes" id="UP000007015">
    <property type="component" value="Chromosome 6"/>
</dbReference>
<dbReference type="GO" id="GO:0005634">
    <property type="term" value="C:nucleus"/>
    <property type="evidence" value="ECO:0007669"/>
    <property type="project" value="TreeGrafter"/>
</dbReference>
<dbReference type="GO" id="GO:0005524">
    <property type="term" value="F:ATP binding"/>
    <property type="evidence" value="ECO:0007669"/>
    <property type="project" value="UniProtKB-KW"/>
</dbReference>
<dbReference type="GO" id="GO:0019912">
    <property type="term" value="F:cyclin-dependent protein kinase activating kinase activity"/>
    <property type="evidence" value="ECO:0007669"/>
    <property type="project" value="TreeGrafter"/>
</dbReference>
<dbReference type="GO" id="GO:0004693">
    <property type="term" value="F:cyclin-dependent protein serine/threonine kinase activity"/>
    <property type="evidence" value="ECO:0007669"/>
    <property type="project" value="UniProtKB-EC"/>
</dbReference>
<dbReference type="GO" id="GO:0106310">
    <property type="term" value="F:protein serine kinase activity"/>
    <property type="evidence" value="ECO:0007669"/>
    <property type="project" value="RHEA"/>
</dbReference>
<dbReference type="GO" id="GO:0008353">
    <property type="term" value="F:RNA polymerase II CTD heptapeptide repeat kinase activity"/>
    <property type="evidence" value="ECO:0007669"/>
    <property type="project" value="UniProtKB-EC"/>
</dbReference>
<dbReference type="FunFam" id="1.10.510.10:FF:000799">
    <property type="entry name" value="Cyclin-dependent kinase F-1"/>
    <property type="match status" value="1"/>
</dbReference>
<dbReference type="FunFam" id="1.10.510.10:FF:000898">
    <property type="entry name" value="Cyclin-dependent kinase F-1"/>
    <property type="match status" value="1"/>
</dbReference>
<dbReference type="Gene3D" id="1.10.510.10">
    <property type="entry name" value="Transferase(Phosphotransferase) domain 1"/>
    <property type="match status" value="2"/>
</dbReference>
<dbReference type="InterPro" id="IPR050108">
    <property type="entry name" value="CDK"/>
</dbReference>
<dbReference type="InterPro" id="IPR011009">
    <property type="entry name" value="Kinase-like_dom_sf"/>
</dbReference>
<dbReference type="InterPro" id="IPR000719">
    <property type="entry name" value="Prot_kinase_dom"/>
</dbReference>
<dbReference type="InterPro" id="IPR008271">
    <property type="entry name" value="Ser/Thr_kinase_AS"/>
</dbReference>
<dbReference type="PANTHER" id="PTHR24056">
    <property type="entry name" value="CELL DIVISION PROTEIN KINASE"/>
    <property type="match status" value="1"/>
</dbReference>
<dbReference type="PANTHER" id="PTHR24056:SF171">
    <property type="entry name" value="CYCLIN-DEPENDENT KINASE 20"/>
    <property type="match status" value="1"/>
</dbReference>
<dbReference type="Pfam" id="PF00069">
    <property type="entry name" value="Pkinase"/>
    <property type="match status" value="2"/>
</dbReference>
<dbReference type="SMART" id="SM00220">
    <property type="entry name" value="S_TKc"/>
    <property type="match status" value="1"/>
</dbReference>
<dbReference type="SUPFAM" id="SSF56112">
    <property type="entry name" value="Protein kinase-like (PK-like)"/>
    <property type="match status" value="1"/>
</dbReference>
<dbReference type="PROSITE" id="PS50011">
    <property type="entry name" value="PROTEIN_KINASE_DOM"/>
    <property type="match status" value="1"/>
</dbReference>
<dbReference type="PROSITE" id="PS00108">
    <property type="entry name" value="PROTEIN_KINASE_ST"/>
    <property type="match status" value="1"/>
</dbReference>
<accession>A2YCH5</accession>
<reference key="1">
    <citation type="journal article" date="2005" name="PLoS Biol.">
        <title>The genomes of Oryza sativa: a history of duplications.</title>
        <authorList>
            <person name="Yu J."/>
            <person name="Wang J."/>
            <person name="Lin W."/>
            <person name="Li S."/>
            <person name="Li H."/>
            <person name="Zhou J."/>
            <person name="Ni P."/>
            <person name="Dong W."/>
            <person name="Hu S."/>
            <person name="Zeng C."/>
            <person name="Zhang J."/>
            <person name="Zhang Y."/>
            <person name="Li R."/>
            <person name="Xu Z."/>
            <person name="Li S."/>
            <person name="Li X."/>
            <person name="Zheng H."/>
            <person name="Cong L."/>
            <person name="Lin L."/>
            <person name="Yin J."/>
            <person name="Geng J."/>
            <person name="Li G."/>
            <person name="Shi J."/>
            <person name="Liu J."/>
            <person name="Lv H."/>
            <person name="Li J."/>
            <person name="Wang J."/>
            <person name="Deng Y."/>
            <person name="Ran L."/>
            <person name="Shi X."/>
            <person name="Wang X."/>
            <person name="Wu Q."/>
            <person name="Li C."/>
            <person name="Ren X."/>
            <person name="Wang J."/>
            <person name="Wang X."/>
            <person name="Li D."/>
            <person name="Liu D."/>
            <person name="Zhang X."/>
            <person name="Ji Z."/>
            <person name="Zhao W."/>
            <person name="Sun Y."/>
            <person name="Zhang Z."/>
            <person name="Bao J."/>
            <person name="Han Y."/>
            <person name="Dong L."/>
            <person name="Ji J."/>
            <person name="Chen P."/>
            <person name="Wu S."/>
            <person name="Liu J."/>
            <person name="Xiao Y."/>
            <person name="Bu D."/>
            <person name="Tan J."/>
            <person name="Yang L."/>
            <person name="Ye C."/>
            <person name="Zhang J."/>
            <person name="Xu J."/>
            <person name="Zhou Y."/>
            <person name="Yu Y."/>
            <person name="Zhang B."/>
            <person name="Zhuang S."/>
            <person name="Wei H."/>
            <person name="Liu B."/>
            <person name="Lei M."/>
            <person name="Yu H."/>
            <person name="Li Y."/>
            <person name="Xu H."/>
            <person name="Wei S."/>
            <person name="He X."/>
            <person name="Fang L."/>
            <person name="Zhang Z."/>
            <person name="Zhang Y."/>
            <person name="Huang X."/>
            <person name="Su Z."/>
            <person name="Tong W."/>
            <person name="Li J."/>
            <person name="Tong Z."/>
            <person name="Li S."/>
            <person name="Ye J."/>
            <person name="Wang L."/>
            <person name="Fang L."/>
            <person name="Lei T."/>
            <person name="Chen C.-S."/>
            <person name="Chen H.-C."/>
            <person name="Xu Z."/>
            <person name="Li H."/>
            <person name="Huang H."/>
            <person name="Zhang F."/>
            <person name="Xu H."/>
            <person name="Li N."/>
            <person name="Zhao C."/>
            <person name="Li S."/>
            <person name="Dong L."/>
            <person name="Huang Y."/>
            <person name="Li L."/>
            <person name="Xi Y."/>
            <person name="Qi Q."/>
            <person name="Li W."/>
            <person name="Zhang B."/>
            <person name="Hu W."/>
            <person name="Zhang Y."/>
            <person name="Tian X."/>
            <person name="Jiao Y."/>
            <person name="Liang X."/>
            <person name="Jin J."/>
            <person name="Gao L."/>
            <person name="Zheng W."/>
            <person name="Hao B."/>
            <person name="Liu S.-M."/>
            <person name="Wang W."/>
            <person name="Yuan L."/>
            <person name="Cao M."/>
            <person name="McDermott J."/>
            <person name="Samudrala R."/>
            <person name="Wang J."/>
            <person name="Wong G.K.-S."/>
            <person name="Yang H."/>
        </authorList>
    </citation>
    <scope>NUCLEOTIDE SEQUENCE [LARGE SCALE GENOMIC DNA]</scope>
    <source>
        <strain>cv. 93-11</strain>
    </source>
</reference>
<keyword id="KW-0067">ATP-binding</keyword>
<keyword id="KW-0418">Kinase</keyword>
<keyword id="KW-0547">Nucleotide-binding</keyword>
<keyword id="KW-0597">Phosphoprotein</keyword>
<keyword id="KW-1185">Reference proteome</keyword>
<keyword id="KW-0723">Serine/threonine-protein kinase</keyword>
<keyword id="KW-0808">Transferase</keyword>
<comment type="catalytic activity">
    <reaction>
        <text>L-seryl-[protein] + ATP = O-phospho-L-seryl-[protein] + ADP + H(+)</text>
        <dbReference type="Rhea" id="RHEA:17989"/>
        <dbReference type="Rhea" id="RHEA-COMP:9863"/>
        <dbReference type="Rhea" id="RHEA-COMP:11604"/>
        <dbReference type="ChEBI" id="CHEBI:15378"/>
        <dbReference type="ChEBI" id="CHEBI:29999"/>
        <dbReference type="ChEBI" id="CHEBI:30616"/>
        <dbReference type="ChEBI" id="CHEBI:83421"/>
        <dbReference type="ChEBI" id="CHEBI:456216"/>
        <dbReference type="EC" id="2.7.11.22"/>
    </reaction>
</comment>
<comment type="catalytic activity">
    <reaction>
        <text>L-threonyl-[protein] + ATP = O-phospho-L-threonyl-[protein] + ADP + H(+)</text>
        <dbReference type="Rhea" id="RHEA:46608"/>
        <dbReference type="Rhea" id="RHEA-COMP:11060"/>
        <dbReference type="Rhea" id="RHEA-COMP:11605"/>
        <dbReference type="ChEBI" id="CHEBI:15378"/>
        <dbReference type="ChEBI" id="CHEBI:30013"/>
        <dbReference type="ChEBI" id="CHEBI:30616"/>
        <dbReference type="ChEBI" id="CHEBI:61977"/>
        <dbReference type="ChEBI" id="CHEBI:456216"/>
        <dbReference type="EC" id="2.7.11.22"/>
    </reaction>
</comment>
<comment type="catalytic activity">
    <reaction>
        <text>[DNA-directed RNA polymerase] + ATP = phospho-[DNA-directed RNA polymerase] + ADP + H(+)</text>
        <dbReference type="Rhea" id="RHEA:10216"/>
        <dbReference type="Rhea" id="RHEA-COMP:11321"/>
        <dbReference type="Rhea" id="RHEA-COMP:11322"/>
        <dbReference type="ChEBI" id="CHEBI:15378"/>
        <dbReference type="ChEBI" id="CHEBI:30616"/>
        <dbReference type="ChEBI" id="CHEBI:43176"/>
        <dbReference type="ChEBI" id="CHEBI:68546"/>
        <dbReference type="ChEBI" id="CHEBI:456216"/>
        <dbReference type="EC" id="2.7.11.23"/>
    </reaction>
</comment>
<comment type="similarity">
    <text evidence="5">Belongs to the protein kinase superfamily. CMGC Ser/Thr protein kinase family. CDC2/CDKX subfamily.</text>
</comment>
<evidence type="ECO:0000250" key="1"/>
<evidence type="ECO:0000255" key="2">
    <source>
        <dbReference type="PROSITE-ProRule" id="PRU00159"/>
    </source>
</evidence>
<evidence type="ECO:0000255" key="3">
    <source>
        <dbReference type="PROSITE-ProRule" id="PRU10027"/>
    </source>
</evidence>
<evidence type="ECO:0000256" key="4">
    <source>
        <dbReference type="SAM" id="MobiDB-lite"/>
    </source>
</evidence>
<evidence type="ECO:0000305" key="5"/>
<gene>
    <name type="primary">CDKF-1</name>
    <name type="ORF">OsI_022018</name>
</gene>
<sequence length="479" mass="52057">MAIGGGGGGGSWSIHGRPDVTSRYEVLGRAGSGAYADVYRGRRRSDGAPVALKEVHDAVSARREADALLAAAPSRHVVALLDHFPGGDHDDDVLVLEWLPLDLSAVVRAAAAARPSAPPAAQRKRWMLQVLEGVAACHSAGVVHRDLKPANLLISEDGVLKVADLGQARILQETGTYQGMHPYEQSSGVEPWVSQQRAVLHGVKENHPSHDSETQTGQEPERLTAADYLHEMDQLRAKSTHGDVDKMSLQDGNASCLATCSTADIDDDPFRASYSYDAEEGMLEEESGAFTSCVGTRWFRAPELLYGSTNYGQEVDLWSLGCILAELFNLEPIFPGTSDIDQIGRIISVLGNITEETFPGCSNLPDYNKIFFNKVEKPIGLEACLPDRSASEVSIIKRLLCYDPTKRASAADLLNDPYFAEEPLPVPIEGLQVPESKDEDDDSTEEWANFRGGDSDSDFDEFGSMDVTKTDKGFSIRFS</sequence>
<name>CDKF1_ORYSI</name>
<protein>
    <recommendedName>
        <fullName>Cyclin-dependent kinase F-1</fullName>
        <shortName>CDKF;1</shortName>
        <ecNumber>2.7.11.22</ecNumber>
        <ecNumber>2.7.11.23</ecNumber>
    </recommendedName>
</protein>